<comment type="function">
    <text evidence="1">Binds the 23S rRNA.</text>
</comment>
<comment type="cofactor">
    <cofactor evidence="1">
        <name>Zn(2+)</name>
        <dbReference type="ChEBI" id="CHEBI:29105"/>
    </cofactor>
    <text evidence="1">Binds 1 zinc ion per subunit.</text>
</comment>
<comment type="subunit">
    <text evidence="1">Part of the 50S ribosomal subunit.</text>
</comment>
<comment type="similarity">
    <text evidence="1">Belongs to the bacterial ribosomal protein bL31 family. Type A subfamily.</text>
</comment>
<name>RL31_PSESM</name>
<proteinExistence type="inferred from homology"/>
<reference key="1">
    <citation type="journal article" date="2003" name="Proc. Natl. Acad. Sci. U.S.A.">
        <title>The complete genome sequence of the Arabidopsis and tomato pathogen Pseudomonas syringae pv. tomato DC3000.</title>
        <authorList>
            <person name="Buell C.R."/>
            <person name="Joardar V."/>
            <person name="Lindeberg M."/>
            <person name="Selengut J."/>
            <person name="Paulsen I.T."/>
            <person name="Gwinn M.L."/>
            <person name="Dodson R.J."/>
            <person name="DeBoy R.T."/>
            <person name="Durkin A.S."/>
            <person name="Kolonay J.F."/>
            <person name="Madupu R."/>
            <person name="Daugherty S.C."/>
            <person name="Brinkac L.M."/>
            <person name="Beanan M.J."/>
            <person name="Haft D.H."/>
            <person name="Nelson W.C."/>
            <person name="Davidsen T.M."/>
            <person name="Zafar N."/>
            <person name="Zhou L."/>
            <person name="Liu J."/>
            <person name="Yuan Q."/>
            <person name="Khouri H.M."/>
            <person name="Fedorova N.B."/>
            <person name="Tran B."/>
            <person name="Russell D."/>
            <person name="Berry K.J."/>
            <person name="Utterback T.R."/>
            <person name="Van Aken S.E."/>
            <person name="Feldblyum T.V."/>
            <person name="D'Ascenzo M."/>
            <person name="Deng W.-L."/>
            <person name="Ramos A.R."/>
            <person name="Alfano J.R."/>
            <person name="Cartinhour S."/>
            <person name="Chatterjee A.K."/>
            <person name="Delaney T.P."/>
            <person name="Lazarowitz S.G."/>
            <person name="Martin G.B."/>
            <person name="Schneider D.J."/>
            <person name="Tang X."/>
            <person name="Bender C.L."/>
            <person name="White O."/>
            <person name="Fraser C.M."/>
            <person name="Collmer A."/>
        </authorList>
    </citation>
    <scope>NUCLEOTIDE SEQUENCE [LARGE SCALE GENOMIC DNA]</scope>
    <source>
        <strain>ATCC BAA-871 / DC3000</strain>
    </source>
</reference>
<gene>
    <name evidence="1" type="primary">rpmE</name>
    <name type="ordered locus">PSPTO_5136</name>
</gene>
<accession>Q87V05</accession>
<protein>
    <recommendedName>
        <fullName evidence="1">Large ribosomal subunit protein bL31</fullName>
    </recommendedName>
    <alternativeName>
        <fullName evidence="2">50S ribosomal protein L31</fullName>
    </alternativeName>
</protein>
<evidence type="ECO:0000255" key="1">
    <source>
        <dbReference type="HAMAP-Rule" id="MF_00501"/>
    </source>
</evidence>
<evidence type="ECO:0000305" key="2"/>
<sequence>MKADIHPVYEAIDATCSCGNVIKTRSTLTGPLSLDVCNECHPFYTGKQKTLDIGGRVDKFKSRFGAFGATKAKQD</sequence>
<keyword id="KW-0479">Metal-binding</keyword>
<keyword id="KW-1185">Reference proteome</keyword>
<keyword id="KW-0687">Ribonucleoprotein</keyword>
<keyword id="KW-0689">Ribosomal protein</keyword>
<keyword id="KW-0694">RNA-binding</keyword>
<keyword id="KW-0699">rRNA-binding</keyword>
<keyword id="KW-0862">Zinc</keyword>
<organism>
    <name type="scientific">Pseudomonas syringae pv. tomato (strain ATCC BAA-871 / DC3000)</name>
    <dbReference type="NCBI Taxonomy" id="223283"/>
    <lineage>
        <taxon>Bacteria</taxon>
        <taxon>Pseudomonadati</taxon>
        <taxon>Pseudomonadota</taxon>
        <taxon>Gammaproteobacteria</taxon>
        <taxon>Pseudomonadales</taxon>
        <taxon>Pseudomonadaceae</taxon>
        <taxon>Pseudomonas</taxon>
    </lineage>
</organism>
<feature type="chain" id="PRO_0000173149" description="Large ribosomal subunit protein bL31">
    <location>
        <begin position="1"/>
        <end position="75"/>
    </location>
</feature>
<feature type="binding site" evidence="1">
    <location>
        <position position="16"/>
    </location>
    <ligand>
        <name>Zn(2+)</name>
        <dbReference type="ChEBI" id="CHEBI:29105"/>
    </ligand>
</feature>
<feature type="binding site" evidence="1">
    <location>
        <position position="18"/>
    </location>
    <ligand>
        <name>Zn(2+)</name>
        <dbReference type="ChEBI" id="CHEBI:29105"/>
    </ligand>
</feature>
<feature type="binding site" evidence="1">
    <location>
        <position position="37"/>
    </location>
    <ligand>
        <name>Zn(2+)</name>
        <dbReference type="ChEBI" id="CHEBI:29105"/>
    </ligand>
</feature>
<feature type="binding site" evidence="1">
    <location>
        <position position="40"/>
    </location>
    <ligand>
        <name>Zn(2+)</name>
        <dbReference type="ChEBI" id="CHEBI:29105"/>
    </ligand>
</feature>
<dbReference type="EMBL" id="AE016853">
    <property type="protein sequence ID" value="AAO58563.1"/>
    <property type="molecule type" value="Genomic_DNA"/>
</dbReference>
<dbReference type="RefSeq" id="NP_794868.1">
    <property type="nucleotide sequence ID" value="NC_004578.1"/>
</dbReference>
<dbReference type="RefSeq" id="WP_003378857.1">
    <property type="nucleotide sequence ID" value="NC_004578.1"/>
</dbReference>
<dbReference type="SMR" id="Q87V05"/>
<dbReference type="STRING" id="223283.PSPTO_5136"/>
<dbReference type="GeneID" id="61789841"/>
<dbReference type="KEGG" id="pst:PSPTO_5136"/>
<dbReference type="PATRIC" id="fig|223283.9.peg.5256"/>
<dbReference type="eggNOG" id="COG0254">
    <property type="taxonomic scope" value="Bacteria"/>
</dbReference>
<dbReference type="HOGENOM" id="CLU_114306_4_0_6"/>
<dbReference type="OrthoDB" id="9803251at2"/>
<dbReference type="PhylomeDB" id="Q87V05"/>
<dbReference type="Proteomes" id="UP000002515">
    <property type="component" value="Chromosome"/>
</dbReference>
<dbReference type="GO" id="GO:1990904">
    <property type="term" value="C:ribonucleoprotein complex"/>
    <property type="evidence" value="ECO:0007669"/>
    <property type="project" value="UniProtKB-KW"/>
</dbReference>
<dbReference type="GO" id="GO:0005840">
    <property type="term" value="C:ribosome"/>
    <property type="evidence" value="ECO:0007669"/>
    <property type="project" value="UniProtKB-KW"/>
</dbReference>
<dbReference type="GO" id="GO:0046872">
    <property type="term" value="F:metal ion binding"/>
    <property type="evidence" value="ECO:0007669"/>
    <property type="project" value="UniProtKB-KW"/>
</dbReference>
<dbReference type="GO" id="GO:0019843">
    <property type="term" value="F:rRNA binding"/>
    <property type="evidence" value="ECO:0007669"/>
    <property type="project" value="UniProtKB-KW"/>
</dbReference>
<dbReference type="GO" id="GO:0003735">
    <property type="term" value="F:structural constituent of ribosome"/>
    <property type="evidence" value="ECO:0007669"/>
    <property type="project" value="InterPro"/>
</dbReference>
<dbReference type="GO" id="GO:0006412">
    <property type="term" value="P:translation"/>
    <property type="evidence" value="ECO:0007669"/>
    <property type="project" value="UniProtKB-UniRule"/>
</dbReference>
<dbReference type="Gene3D" id="4.10.830.30">
    <property type="entry name" value="Ribosomal protein L31"/>
    <property type="match status" value="1"/>
</dbReference>
<dbReference type="HAMAP" id="MF_00501">
    <property type="entry name" value="Ribosomal_bL31_1"/>
    <property type="match status" value="1"/>
</dbReference>
<dbReference type="InterPro" id="IPR034704">
    <property type="entry name" value="Ribosomal_bL28/bL31-like_sf"/>
</dbReference>
<dbReference type="InterPro" id="IPR002150">
    <property type="entry name" value="Ribosomal_bL31"/>
</dbReference>
<dbReference type="InterPro" id="IPR027491">
    <property type="entry name" value="Ribosomal_bL31_A"/>
</dbReference>
<dbReference type="InterPro" id="IPR042105">
    <property type="entry name" value="Ribosomal_bL31_sf"/>
</dbReference>
<dbReference type="NCBIfam" id="TIGR00105">
    <property type="entry name" value="L31"/>
    <property type="match status" value="1"/>
</dbReference>
<dbReference type="NCBIfam" id="NF000612">
    <property type="entry name" value="PRK00019.1"/>
    <property type="match status" value="1"/>
</dbReference>
<dbReference type="PANTHER" id="PTHR33280">
    <property type="entry name" value="50S RIBOSOMAL PROTEIN L31, CHLOROPLASTIC"/>
    <property type="match status" value="1"/>
</dbReference>
<dbReference type="PANTHER" id="PTHR33280:SF6">
    <property type="entry name" value="LARGE RIBOSOMAL SUBUNIT PROTEIN BL31A"/>
    <property type="match status" value="1"/>
</dbReference>
<dbReference type="Pfam" id="PF01197">
    <property type="entry name" value="Ribosomal_L31"/>
    <property type="match status" value="1"/>
</dbReference>
<dbReference type="PRINTS" id="PR01249">
    <property type="entry name" value="RIBOSOMALL31"/>
</dbReference>
<dbReference type="SUPFAM" id="SSF143800">
    <property type="entry name" value="L28p-like"/>
    <property type="match status" value="1"/>
</dbReference>
<dbReference type="PROSITE" id="PS01143">
    <property type="entry name" value="RIBOSOMAL_L31"/>
    <property type="match status" value="1"/>
</dbReference>